<organism>
    <name type="scientific">Borrelia garinii subsp. bavariensis (strain ATCC BAA-2496 / DSM 23469 / PBi)</name>
    <name type="common">Borreliella bavariensis</name>
    <dbReference type="NCBI Taxonomy" id="290434"/>
    <lineage>
        <taxon>Bacteria</taxon>
        <taxon>Pseudomonadati</taxon>
        <taxon>Spirochaetota</taxon>
        <taxon>Spirochaetia</taxon>
        <taxon>Spirochaetales</taxon>
        <taxon>Borreliaceae</taxon>
        <taxon>Borreliella</taxon>
    </lineage>
</organism>
<protein>
    <recommendedName>
        <fullName evidence="1">Small ribosomal subunit protein bS6</fullName>
    </recommendedName>
    <alternativeName>
        <fullName evidence="3">30S ribosomal protein S6</fullName>
    </alternativeName>
</protein>
<gene>
    <name evidence="1" type="primary">rpsF</name>
    <name type="ordered locus">BG0116</name>
</gene>
<reference key="1">
    <citation type="journal article" date="2004" name="Nucleic Acids Res.">
        <title>Comparative analysis of the Borrelia garinii genome.</title>
        <authorList>
            <person name="Gloeckner G."/>
            <person name="Lehmann R."/>
            <person name="Romualdi A."/>
            <person name="Pradella S."/>
            <person name="Schulte-Spechtel U."/>
            <person name="Schilhabel M."/>
            <person name="Wilske B."/>
            <person name="Suehnel J."/>
            <person name="Platzer M."/>
        </authorList>
    </citation>
    <scope>NUCLEOTIDE SEQUENCE [LARGE SCALE GENOMIC DNA]</scope>
    <source>
        <strain>ATCC BAA-2496 / DSM 23469 / PBi</strain>
    </source>
</reference>
<accession>Q662P7</accession>
<name>RS6_BORGP</name>
<evidence type="ECO:0000255" key="1">
    <source>
        <dbReference type="HAMAP-Rule" id="MF_00360"/>
    </source>
</evidence>
<evidence type="ECO:0000256" key="2">
    <source>
        <dbReference type="SAM" id="MobiDB-lite"/>
    </source>
</evidence>
<evidence type="ECO:0000305" key="3"/>
<dbReference type="EMBL" id="CP000013">
    <property type="protein sequence ID" value="AAU06974.1"/>
    <property type="molecule type" value="Genomic_DNA"/>
</dbReference>
<dbReference type="RefSeq" id="WP_011193467.1">
    <property type="nucleotide sequence ID" value="NZ_CP028872.1"/>
</dbReference>
<dbReference type="SMR" id="Q662P7"/>
<dbReference type="GeneID" id="45160911"/>
<dbReference type="KEGG" id="bga:BG0116"/>
<dbReference type="eggNOG" id="COG0360">
    <property type="taxonomic scope" value="Bacteria"/>
</dbReference>
<dbReference type="HOGENOM" id="CLU_1902635_0_0_12"/>
<dbReference type="OrthoDB" id="9812702at2"/>
<dbReference type="Proteomes" id="UP000002276">
    <property type="component" value="Chromosome"/>
</dbReference>
<dbReference type="GO" id="GO:1990904">
    <property type="term" value="C:ribonucleoprotein complex"/>
    <property type="evidence" value="ECO:0007669"/>
    <property type="project" value="UniProtKB-KW"/>
</dbReference>
<dbReference type="GO" id="GO:0005840">
    <property type="term" value="C:ribosome"/>
    <property type="evidence" value="ECO:0007669"/>
    <property type="project" value="UniProtKB-KW"/>
</dbReference>
<dbReference type="GO" id="GO:0019843">
    <property type="term" value="F:rRNA binding"/>
    <property type="evidence" value="ECO:0007669"/>
    <property type="project" value="UniProtKB-UniRule"/>
</dbReference>
<dbReference type="GO" id="GO:0003735">
    <property type="term" value="F:structural constituent of ribosome"/>
    <property type="evidence" value="ECO:0007669"/>
    <property type="project" value="InterPro"/>
</dbReference>
<dbReference type="GO" id="GO:0006412">
    <property type="term" value="P:translation"/>
    <property type="evidence" value="ECO:0007669"/>
    <property type="project" value="UniProtKB-UniRule"/>
</dbReference>
<dbReference type="CDD" id="cd00473">
    <property type="entry name" value="bS6"/>
    <property type="match status" value="1"/>
</dbReference>
<dbReference type="Gene3D" id="3.30.70.60">
    <property type="match status" value="1"/>
</dbReference>
<dbReference type="HAMAP" id="MF_00360">
    <property type="entry name" value="Ribosomal_bS6"/>
    <property type="match status" value="1"/>
</dbReference>
<dbReference type="InterPro" id="IPR000529">
    <property type="entry name" value="Ribosomal_bS6"/>
</dbReference>
<dbReference type="InterPro" id="IPR035980">
    <property type="entry name" value="Ribosomal_bS6_sf"/>
</dbReference>
<dbReference type="InterPro" id="IPR020814">
    <property type="entry name" value="Ribosomal_S6_plastid/chlpt"/>
</dbReference>
<dbReference type="InterPro" id="IPR014717">
    <property type="entry name" value="Transl_elong_EF1B/ribsomal_bS6"/>
</dbReference>
<dbReference type="NCBIfam" id="TIGR00166">
    <property type="entry name" value="S6"/>
    <property type="match status" value="1"/>
</dbReference>
<dbReference type="Pfam" id="PF01250">
    <property type="entry name" value="Ribosomal_S6"/>
    <property type="match status" value="1"/>
</dbReference>
<dbReference type="SUPFAM" id="SSF54995">
    <property type="entry name" value="Ribosomal protein S6"/>
    <property type="match status" value="1"/>
</dbReference>
<keyword id="KW-0687">Ribonucleoprotein</keyword>
<keyword id="KW-0689">Ribosomal protein</keyword>
<keyword id="KW-0694">RNA-binding</keyword>
<keyword id="KW-0699">rRNA-binding</keyword>
<comment type="function">
    <text evidence="1">Binds together with bS18 to 16S ribosomal RNA.</text>
</comment>
<comment type="similarity">
    <text evidence="1">Belongs to the bacterial ribosomal protein bS6 family.</text>
</comment>
<sequence>MIKRYEACFLFKSEEIEYKCSLEEVRKSLEFFGAIDIVSNFIGERALEYPIKKQARGRYEIIEFSMEGNNLKELESRLKLIKNLLRYMILVKIVRKINTKKIKRRNFREFRDNVDKESFKGGSKIETPTGSESTDIQEK</sequence>
<feature type="chain" id="PRO_0000176734" description="Small ribosomal subunit protein bS6">
    <location>
        <begin position="1"/>
        <end position="139"/>
    </location>
</feature>
<feature type="region of interest" description="Disordered" evidence="2">
    <location>
        <begin position="118"/>
        <end position="139"/>
    </location>
</feature>
<feature type="compositionally biased region" description="Polar residues" evidence="2">
    <location>
        <begin position="126"/>
        <end position="139"/>
    </location>
</feature>
<proteinExistence type="inferred from homology"/>